<feature type="chain" id="PRO_0000079795" description="Drebrin-like protein">
    <location>
        <begin position="1"/>
        <end position="436"/>
    </location>
</feature>
<feature type="domain" description="ADF-H" evidence="6">
    <location>
        <begin position="2"/>
        <end position="133"/>
    </location>
</feature>
<feature type="domain" description="SH3" evidence="5">
    <location>
        <begin position="377"/>
        <end position="436"/>
    </location>
</feature>
<feature type="region of interest" description="Disordered" evidence="7">
    <location>
        <begin position="185"/>
        <end position="371"/>
    </location>
</feature>
<feature type="coiled-coil region" evidence="4">
    <location>
        <begin position="178"/>
        <end position="232"/>
    </location>
</feature>
<feature type="compositionally biased region" description="Basic and acidic residues" evidence="7">
    <location>
        <begin position="185"/>
        <end position="229"/>
    </location>
</feature>
<feature type="compositionally biased region" description="Basic and acidic residues" evidence="7">
    <location>
        <begin position="264"/>
        <end position="275"/>
    </location>
</feature>
<feature type="compositionally biased region" description="Polar residues" evidence="7">
    <location>
        <begin position="276"/>
        <end position="286"/>
    </location>
</feature>
<feature type="site" description="Cleavage; by caspase-3" evidence="1">
    <location>
        <begin position="367"/>
        <end position="368"/>
    </location>
</feature>
<feature type="modified residue" description="Phosphothreonine" evidence="2">
    <location>
        <position position="26"/>
    </location>
</feature>
<feature type="modified residue" description="Phosphoserine" evidence="3">
    <location>
        <position position="160"/>
    </location>
</feature>
<feature type="modified residue" description="N6-acetyllysine" evidence="3">
    <location>
        <position position="176"/>
    </location>
</feature>
<feature type="modified residue" description="Phosphoserine" evidence="3">
    <location>
        <position position="277"/>
    </location>
</feature>
<feature type="modified residue" description="Phosphoserine" evidence="3">
    <location>
        <position position="280"/>
    </location>
</feature>
<feature type="modified residue" description="Phosphoserine" evidence="3">
    <location>
        <position position="283"/>
    </location>
</feature>
<feature type="modified residue" description="Phosphoserine" evidence="18">
    <location>
        <position position="291"/>
    </location>
</feature>
<feature type="modified residue" description="N6-acetyllysine" evidence="3">
    <location>
        <position position="296"/>
    </location>
</feature>
<feature type="modified residue" description="Phosphothreonine" evidence="18">
    <location>
        <position position="299"/>
    </location>
</feature>
<feature type="modified residue" description="Phosphoserine" evidence="18">
    <location>
        <position position="311"/>
    </location>
</feature>
<feature type="modified residue" description="Phosphotyrosine" evidence="2">
    <location>
        <position position="340"/>
    </location>
</feature>
<feature type="modified residue" description="Phosphotyrosine" evidence="2">
    <location>
        <position position="350"/>
    </location>
</feature>
<feature type="splice variant" id="VSP_050791" description="In isoform 3 and isoform 4." evidence="14">
    <location>
        <begin position="235"/>
        <end position="238"/>
    </location>
</feature>
<feature type="splice variant" id="VSP_050792" description="In isoform 2." evidence="14">
    <location>
        <begin position="236"/>
        <end position="238"/>
    </location>
</feature>
<feature type="splice variant" id="VSP_050793" description="In isoform 4." evidence="14">
    <location>
        <position position="256"/>
    </location>
</feature>
<keyword id="KW-0007">Acetylation</keyword>
<keyword id="KW-0009">Actin-binding</keyword>
<keyword id="KW-1064">Adaptive immunity</keyword>
<keyword id="KW-0025">Alternative splicing</keyword>
<keyword id="KW-0965">Cell junction</keyword>
<keyword id="KW-1003">Cell membrane</keyword>
<keyword id="KW-0966">Cell projection</keyword>
<keyword id="KW-0175">Coiled coil</keyword>
<keyword id="KW-0963">Cytoplasm</keyword>
<keyword id="KW-0968">Cytoplasmic vesicle</keyword>
<keyword id="KW-0206">Cytoskeleton</keyword>
<keyword id="KW-0254">Endocytosis</keyword>
<keyword id="KW-0967">Endosome</keyword>
<keyword id="KW-0333">Golgi apparatus</keyword>
<keyword id="KW-0391">Immunity</keyword>
<keyword id="KW-0472">Membrane</keyword>
<keyword id="KW-0597">Phosphoprotein</keyword>
<keyword id="KW-1185">Reference proteome</keyword>
<keyword id="KW-0728">SH3 domain</keyword>
<keyword id="KW-0770">Synapse</keyword>
<keyword id="KW-0813">Transport</keyword>
<accession>Q9JHL4</accession>
<accession>Q9JM66</accession>
<accession>Q9JM67</accession>
<accession>Q9JM74</accession>
<protein>
    <recommendedName>
        <fullName>Drebrin-like protein</fullName>
    </recommendedName>
    <alternativeName>
        <fullName>Actin-binding protein 1</fullName>
        <shortName>Abp1</shortName>
    </alternativeName>
    <alternativeName>
        <fullName>SH3 domain-containing protein 7</fullName>
    </alternativeName>
</protein>
<proteinExistence type="evidence at protein level"/>
<comment type="function">
    <text evidence="1 8 11 12 13">Adapter protein that binds F-actin and DNM1, and thereby plays a role in receptor-mediated endocytosis. Required for the formation of organized podosome rosettes. May act as a common effector of antigen receptor-signaling pathways in leukocytes. Acts as a key component of the immunological synapse that regulates T-cell activation by bridging TCRs and the actin cytoskeleton to gene activation and endocytic processes (By similarity). Plays a role in the reorganization of the actin cytoskeleton, formation of cell projections, such as neurites, in neuron morphogenesis and synapse formation via its interaction with WASL and COBL. Does not bind G-actin and promote actin polymerization by itself.</text>
</comment>
<comment type="subunit">
    <text evidence="1 8 10 11 12 13">Interacts with FGD1, MAP4K1 and PRAM1 (By similarity). Interacts with ANKRD54. Interacts with WASL and WIPF1 (By similarity). Interacts with SHANK2 and SHANK3. Interacts with both COBL and PACSIN1. Interacts with DNM1 and SYN1.</text>
</comment>
<comment type="subcellular location">
    <subcellularLocation>
        <location evidence="13">Cytoplasm</location>
        <location evidence="13">Cytoskeleton</location>
    </subcellularLocation>
    <subcellularLocation>
        <location evidence="13">Cell projection</location>
        <location evidence="13">Lamellipodium</location>
    </subcellularLocation>
    <subcellularLocation>
        <location evidence="13">Cell projection</location>
        <location evidence="13">Ruffle</location>
    </subcellularLocation>
    <subcellularLocation>
        <location evidence="13">Cytoplasm</location>
        <location evidence="13">Cell cortex</location>
    </subcellularLocation>
    <subcellularLocation>
        <location evidence="13">Cytoplasm</location>
        <location evidence="13">Cytosol</location>
    </subcellularLocation>
    <subcellularLocation>
        <location evidence="13">Cell membrane</location>
        <topology>Peripheral membrane protein</topology>
        <orientation>Cytoplasmic side</orientation>
    </subcellularLocation>
    <subcellularLocation>
        <location evidence="10">Synapse</location>
    </subcellularLocation>
    <subcellularLocation>
        <location evidence="2">Perikaryon</location>
    </subcellularLocation>
    <subcellularLocation>
        <location evidence="2">Cell projection</location>
        <location evidence="2">Neuron projection</location>
    </subcellularLocation>
    <subcellularLocation>
        <location evidence="10">Cell projection</location>
        <location evidence="10">Dendrite</location>
    </subcellularLocation>
    <subcellularLocation>
        <location evidence="10">Postsynaptic density</location>
    </subcellularLocation>
    <subcellularLocation>
        <location evidence="2">Golgi apparatus membrane</location>
        <topology>Peripheral membrane protein</topology>
        <orientation>Cytoplasmic side</orientation>
    </subcellularLocation>
    <subcellularLocation>
        <location evidence="2">Cytoplasmic vesicle</location>
        <location evidence="2">Clathrin-coated vesicle membrane</location>
        <topology>Peripheral membrane protein</topology>
        <orientation>Cytoplasmic side</orientation>
    </subcellularLocation>
    <subcellularLocation>
        <location evidence="2">Cell projection</location>
        <location evidence="2">Podosome</location>
    </subcellularLocation>
    <subcellularLocation>
        <location evidence="3">Early endosome</location>
    </subcellularLocation>
    <text evidence="13">Associates with lamellipodial actin and membrane ruffles. Colocalizes with actin and cortactin at podosome dots and podosome rosettes.</text>
</comment>
<comment type="alternative products">
    <event type="alternative splicing"/>
    <isoform>
        <id>Q9JHL4-1</id>
        <name evidence="9">1</name>
        <name evidence="14">SH3P7r1</name>
        <sequence type="displayed"/>
    </isoform>
    <isoform>
        <id>Q9JHL4-2</id>
        <name evidence="9">2</name>
        <name evidence="14">SH3PQ624187r2</name>
        <sequence type="described" ref="VSP_050792"/>
    </isoform>
    <isoform>
        <id>Q9JHL4-3</id>
        <name evidence="9">3</name>
        <name evidence="14">SH3P7r3</name>
        <sequence type="described" ref="VSP_050791"/>
    </isoform>
    <isoform>
        <id>Q9JHL4-4</id>
        <name evidence="9">4</name>
        <name evidence="14">SH3P7r4</name>
        <sequence type="described" ref="VSP_050791 VSP_050793"/>
    </isoform>
</comment>
<comment type="tissue specificity">
    <text evidence="9 10 12">Detected in brain (at protein level). Widely expressed in brain with highest levels in hippocampus and cerebral cortex. Located primarily in dendrites and, in moderate amounts, in cell bodies. Isoform 1 and isoform 3 are the predominant isoforms in brain.</text>
</comment>
<comment type="domain">
    <text>The SH3 domain mediates interaction with SHANK2, SHANK3 and PRAM1.</text>
</comment>
<comment type="similarity">
    <text evidence="15">Belongs to the ABP1 family.</text>
</comment>
<gene>
    <name evidence="16" type="primary">Dbnl</name>
    <name evidence="17" type="synonym">Sh3p7</name>
</gene>
<reference evidence="15 17" key="1">
    <citation type="journal article" date="2001" name="Eur. J. Neurosci.">
        <title>Molecular cloning and dendritic localization of rat SH3P7.</title>
        <authorList>
            <person name="Yamazaki H."/>
            <person name="Takahashi H."/>
            <person name="Aoki T."/>
            <person name="Shirao T."/>
        </authorList>
    </citation>
    <scope>NUCLEOTIDE SEQUENCE [MRNA] (ISOFORMS 1; 2; 3 AND 4)</scope>
    <scope>TISSUE SPECIFICITY</scope>
    <source>
        <tissue evidence="17">Hippocampus</tissue>
    </source>
</reference>
<reference key="2">
    <citation type="journal article" date="2004" name="Genome Res.">
        <title>The status, quality, and expansion of the NIH full-length cDNA project: the Mammalian Gene Collection (MGC).</title>
        <authorList>
            <consortium name="The MGC Project Team"/>
        </authorList>
    </citation>
    <scope>NUCLEOTIDE SEQUENCE [LARGE SCALE MRNA] (ISOFORM 1)</scope>
    <source>
        <tissue>Heart</tissue>
    </source>
</reference>
<reference key="3">
    <citation type="journal article" date="2001" name="J. Cell Biol.">
        <title>Mammalian Abp1, a signal-responsive F-actin-binding protein, links the actin cytoskeleton to endocytosis via the GTPase dynamin.</title>
        <authorList>
            <person name="Kessels M.M."/>
            <person name="Engqvist-Goldstein A.E."/>
            <person name="Drubin D.G."/>
            <person name="Qualmann B."/>
        </authorList>
    </citation>
    <scope>FUNCTION</scope>
    <scope>INTERACTION WITH DNM1 AND SYN1</scope>
    <scope>SUBCELLULAR LOCATION</scope>
</reference>
<reference key="4">
    <citation type="journal article" date="2004" name="J. Neurosci.">
        <title>Linkage of the actin cytoskeleton to the postsynaptic density via direct interactions of Abp1 with the ProSAP/Shank family.</title>
        <authorList>
            <person name="Qualmann B."/>
            <person name="Boeckers T.M."/>
            <person name="Jeromin M."/>
            <person name="Gundelfinger E.D."/>
            <person name="Kessels M.M."/>
        </authorList>
    </citation>
    <scope>INTERACTION WITH SHANK2 AND SHANK3</scope>
    <scope>TISSUE SPECIFICITY</scope>
    <scope>SUBCELLULAR LOCATION</scope>
</reference>
<reference key="5">
    <citation type="journal article" date="2007" name="Cell">
        <title>Cordon-bleu is an actin nucleation factor and controls neuronal morphology.</title>
        <authorList>
            <person name="Ahuja R."/>
            <person name="Pinyol R."/>
            <person name="Reichenbach N."/>
            <person name="Custer L."/>
            <person name="Klingensmith J."/>
            <person name="Kessels M.M."/>
            <person name="Qualmann B."/>
        </authorList>
    </citation>
    <scope>FUNCTION</scope>
    <scope>INTERACTION WITH COBL AND PACSIN1</scope>
    <scope>TISSUE SPECIFICITY</scope>
</reference>
<reference key="6">
    <citation type="journal article" date="2007" name="PLoS ONE">
        <title>Regulation of N-WASP and the Arp2/3 complex by Abp1 controls neuronal morphology.</title>
        <authorList>
            <person name="Pinyol R."/>
            <person name="Haeckel A."/>
            <person name="Ritter A."/>
            <person name="Qualmann B."/>
            <person name="Kessels M.M."/>
        </authorList>
    </citation>
    <scope>FUNCTION</scope>
    <scope>SUBCELLULAR LOCATION</scope>
    <scope>INTERACTION WITH WASL</scope>
</reference>
<reference key="7">
    <citation type="journal article" date="2012" name="J. Neurosci.">
        <title>The actin nucleator Cobl is crucial for Purkinje cell development and works in close conjunction with the F-actin binding protein Abp1.</title>
        <authorList>
            <person name="Haag N."/>
            <person name="Schwintzer L."/>
            <person name="Ahuja R."/>
            <person name="Koch N."/>
            <person name="Grimm J."/>
            <person name="Heuer H."/>
            <person name="Qualmann B."/>
            <person name="Kessels M.M."/>
        </authorList>
    </citation>
    <scope>FUNCTION</scope>
    <scope>INTERACTION WITH COBL</scope>
    <scope>SUBCELLULAR LOCATION</scope>
</reference>
<reference key="8">
    <citation type="journal article" date="2012" name="Nat. Commun.">
        <title>Quantitative maps of protein phosphorylation sites across 14 different rat organs and tissues.</title>
        <authorList>
            <person name="Lundby A."/>
            <person name="Secher A."/>
            <person name="Lage K."/>
            <person name="Nordsborg N.B."/>
            <person name="Dmytriyev A."/>
            <person name="Lundby C."/>
            <person name="Olsen J.V."/>
        </authorList>
    </citation>
    <scope>PHOSPHORYLATION [LARGE SCALE ANALYSIS] AT SER-291; THR-299 AND SER-311</scope>
    <scope>IDENTIFICATION BY MASS SPECTROMETRY [LARGE SCALE ANALYSIS]</scope>
</reference>
<organism>
    <name type="scientific">Rattus norvegicus</name>
    <name type="common">Rat</name>
    <dbReference type="NCBI Taxonomy" id="10116"/>
    <lineage>
        <taxon>Eukaryota</taxon>
        <taxon>Metazoa</taxon>
        <taxon>Chordata</taxon>
        <taxon>Craniata</taxon>
        <taxon>Vertebrata</taxon>
        <taxon>Euteleostomi</taxon>
        <taxon>Mammalia</taxon>
        <taxon>Eutheria</taxon>
        <taxon>Euarchontoglires</taxon>
        <taxon>Glires</taxon>
        <taxon>Rodentia</taxon>
        <taxon>Myomorpha</taxon>
        <taxon>Muroidea</taxon>
        <taxon>Muridae</taxon>
        <taxon>Murinae</taxon>
        <taxon>Rattus</taxon>
    </lineage>
</organism>
<sequence length="436" mass="48613">MAVNLSRNGPALQEAYVRVVTEKSPTDWALFTYEGNSNDIRVAGTGEGGLEELVEELNSGKVMYAFCRVKDPNSGLPKFVLINWTGEGVNDVRKGACANHVSTMANFLKGAHVTINARAEEDVEPECIMEKVAKASGANYSFHKESSCFQDVGPQAPVGSVYQKTNAVSEIKRVGKDNFWAKAEKEEENRRLEEKRRAEEEKQRLEEERRERELQEAARREQRYQEQHRSAGPPSPSSRTGELEQEVVSRSRQEWESAGQQAPHPREIFKQKERAMSTTSVSSSQPGKLRSPFLQKQFTQPEASYGREPTSPVSRPAAGVCEELAPSTPPSAQTDDEPTYEVPSEQETLYEEPPPVQQPGAGSGHIDNYMQSQDLSGQGLCARALYDYQAADDTEISFDPENLITGIEVIDEGWWRGYGPDGHFGMFPANYVELIE</sequence>
<evidence type="ECO:0000250" key="1"/>
<evidence type="ECO:0000250" key="2">
    <source>
        <dbReference type="UniProtKB" id="Q62418"/>
    </source>
</evidence>
<evidence type="ECO:0000250" key="3">
    <source>
        <dbReference type="UniProtKB" id="Q9UJU6"/>
    </source>
</evidence>
<evidence type="ECO:0000255" key="4"/>
<evidence type="ECO:0000255" key="5">
    <source>
        <dbReference type="PROSITE-ProRule" id="PRU00192"/>
    </source>
</evidence>
<evidence type="ECO:0000255" key="6">
    <source>
        <dbReference type="PROSITE-ProRule" id="PRU00599"/>
    </source>
</evidence>
<evidence type="ECO:0000256" key="7">
    <source>
        <dbReference type="SAM" id="MobiDB-lite"/>
    </source>
</evidence>
<evidence type="ECO:0000269" key="8">
    <source>
    </source>
</evidence>
<evidence type="ECO:0000269" key="9">
    <source>
    </source>
</evidence>
<evidence type="ECO:0000269" key="10">
    <source>
    </source>
</evidence>
<evidence type="ECO:0000269" key="11">
    <source>
    </source>
</evidence>
<evidence type="ECO:0000269" key="12">
    <source>
    </source>
</evidence>
<evidence type="ECO:0000269" key="13">
    <source>
    </source>
</evidence>
<evidence type="ECO:0000303" key="14">
    <source>
    </source>
</evidence>
<evidence type="ECO:0000305" key="15"/>
<evidence type="ECO:0000312" key="16">
    <source>
        <dbReference type="EMBL" id="AAH72483.1"/>
    </source>
</evidence>
<evidence type="ECO:0000312" key="17">
    <source>
        <dbReference type="EMBL" id="BAA90867.1"/>
    </source>
</evidence>
<evidence type="ECO:0007744" key="18">
    <source>
    </source>
</evidence>
<name>DBNL_RAT</name>
<dbReference type="EMBL" id="AB038364">
    <property type="protein sequence ID" value="BAA90866.1"/>
    <property type="molecule type" value="mRNA"/>
</dbReference>
<dbReference type="EMBL" id="AB038365">
    <property type="protein sequence ID" value="BAA90867.1"/>
    <property type="molecule type" value="mRNA"/>
</dbReference>
<dbReference type="EMBL" id="AB039818">
    <property type="protein sequence ID" value="BAA92708.1"/>
    <property type="molecule type" value="mRNA"/>
</dbReference>
<dbReference type="EMBL" id="AB039819">
    <property type="protein sequence ID" value="BAA92709.1"/>
    <property type="molecule type" value="mRNA"/>
</dbReference>
<dbReference type="EMBL" id="AB009346">
    <property type="protein sequence ID" value="BAA90819.1"/>
    <property type="molecule type" value="mRNA"/>
</dbReference>
<dbReference type="EMBL" id="BC072483">
    <property type="protein sequence ID" value="AAH72483.1"/>
    <property type="molecule type" value="mRNA"/>
</dbReference>
<dbReference type="RefSeq" id="NP_001264140.1">
    <molecule id="Q9JHL4-1"/>
    <property type="nucleotide sequence ID" value="NM_001277211.1"/>
</dbReference>
<dbReference type="RefSeq" id="NP_001264141.1">
    <molecule id="Q9JHL4-3"/>
    <property type="nucleotide sequence ID" value="NM_001277212.1"/>
</dbReference>
<dbReference type="RefSeq" id="NP_001264142.1">
    <molecule id="Q9JHL4-4"/>
    <property type="nucleotide sequence ID" value="NM_001277213.1"/>
</dbReference>
<dbReference type="RefSeq" id="NP_112642.1">
    <molecule id="Q9JHL4-2"/>
    <property type="nucleotide sequence ID" value="NM_031352.2"/>
</dbReference>
<dbReference type="SMR" id="Q9JHL4"/>
<dbReference type="BioGRID" id="249745">
    <property type="interactions" value="3"/>
</dbReference>
<dbReference type="FunCoup" id="Q9JHL4">
    <property type="interactions" value="3699"/>
</dbReference>
<dbReference type="IntAct" id="Q9JHL4">
    <property type="interactions" value="2"/>
</dbReference>
<dbReference type="MINT" id="Q9JHL4"/>
<dbReference type="STRING" id="10116.ENSRNOP00000017375"/>
<dbReference type="iPTMnet" id="Q9JHL4"/>
<dbReference type="PhosphoSitePlus" id="Q9JHL4"/>
<dbReference type="jPOST" id="Q9JHL4"/>
<dbReference type="PaxDb" id="10116-ENSRNOP00000017375"/>
<dbReference type="Ensembl" id="ENSRNOT00000017375.8">
    <molecule id="Q9JHL4-1"/>
    <property type="protein sequence ID" value="ENSRNOP00000017375.7"/>
    <property type="gene ID" value="ENSRNOG00000012378.8"/>
</dbReference>
<dbReference type="GeneID" id="83527"/>
<dbReference type="KEGG" id="rno:83527"/>
<dbReference type="UCSC" id="RGD:70941">
    <molecule id="Q9JHL4-1"/>
    <property type="organism name" value="rat"/>
</dbReference>
<dbReference type="AGR" id="RGD:70941"/>
<dbReference type="CTD" id="28988"/>
<dbReference type="RGD" id="70941">
    <property type="gene designation" value="Dbnl"/>
</dbReference>
<dbReference type="eggNOG" id="KOG3655">
    <property type="taxonomic scope" value="Eukaryota"/>
</dbReference>
<dbReference type="GeneTree" id="ENSGT00940000156732"/>
<dbReference type="HOGENOM" id="CLU_013085_0_1_1"/>
<dbReference type="InParanoid" id="Q9JHL4"/>
<dbReference type="OMA" id="FKEPRGA"/>
<dbReference type="OrthoDB" id="77437at9989"/>
<dbReference type="PhylomeDB" id="Q9JHL4"/>
<dbReference type="TreeFam" id="TF318935"/>
<dbReference type="PRO" id="PR:Q9JHL4"/>
<dbReference type="Proteomes" id="UP000002494">
    <property type="component" value="Chromosome 14"/>
</dbReference>
<dbReference type="Bgee" id="ENSRNOG00000012378">
    <property type="expression patterns" value="Expressed in spleen and 19 other cell types or tissues"/>
</dbReference>
<dbReference type="GO" id="GO:0070161">
    <property type="term" value="C:anchoring junction"/>
    <property type="evidence" value="ECO:0007669"/>
    <property type="project" value="UniProtKB-KW"/>
</dbReference>
<dbReference type="GO" id="GO:0005938">
    <property type="term" value="C:cell cortex"/>
    <property type="evidence" value="ECO:0000250"/>
    <property type="project" value="UniProtKB"/>
</dbReference>
<dbReference type="GO" id="GO:0030665">
    <property type="term" value="C:clathrin-coated vesicle membrane"/>
    <property type="evidence" value="ECO:0007669"/>
    <property type="project" value="UniProtKB-SubCell"/>
</dbReference>
<dbReference type="GO" id="GO:0030864">
    <property type="term" value="C:cortical actin cytoskeleton"/>
    <property type="evidence" value="ECO:0000318"/>
    <property type="project" value="GO_Central"/>
</dbReference>
<dbReference type="GO" id="GO:0005737">
    <property type="term" value="C:cytoplasm"/>
    <property type="evidence" value="ECO:0000250"/>
    <property type="project" value="UniProtKB"/>
</dbReference>
<dbReference type="GO" id="GO:0005829">
    <property type="term" value="C:cytosol"/>
    <property type="evidence" value="ECO:0007669"/>
    <property type="project" value="UniProtKB-SubCell"/>
</dbReference>
<dbReference type="GO" id="GO:0030425">
    <property type="term" value="C:dendrite"/>
    <property type="evidence" value="ECO:0000314"/>
    <property type="project" value="RGD"/>
</dbReference>
<dbReference type="GO" id="GO:0005769">
    <property type="term" value="C:early endosome"/>
    <property type="evidence" value="ECO:0007669"/>
    <property type="project" value="UniProtKB-SubCell"/>
</dbReference>
<dbReference type="GO" id="GO:0098978">
    <property type="term" value="C:glutamatergic synapse"/>
    <property type="evidence" value="ECO:0000314"/>
    <property type="project" value="SynGO"/>
</dbReference>
<dbReference type="GO" id="GO:0000139">
    <property type="term" value="C:Golgi membrane"/>
    <property type="evidence" value="ECO:0007669"/>
    <property type="project" value="UniProtKB-SubCell"/>
</dbReference>
<dbReference type="GO" id="GO:0030027">
    <property type="term" value="C:lamellipodium"/>
    <property type="evidence" value="ECO:0000250"/>
    <property type="project" value="UniProtKB"/>
</dbReference>
<dbReference type="GO" id="GO:0043204">
    <property type="term" value="C:perikaryon"/>
    <property type="evidence" value="ECO:0007669"/>
    <property type="project" value="UniProtKB-SubCell"/>
</dbReference>
<dbReference type="GO" id="GO:0002102">
    <property type="term" value="C:podosome"/>
    <property type="evidence" value="ECO:0000250"/>
    <property type="project" value="UniProtKB"/>
</dbReference>
<dbReference type="GO" id="GO:0098794">
    <property type="term" value="C:postsynapse"/>
    <property type="evidence" value="ECO:0000314"/>
    <property type="project" value="SynGO"/>
</dbReference>
<dbReference type="GO" id="GO:0014069">
    <property type="term" value="C:postsynaptic density"/>
    <property type="evidence" value="ECO:0000318"/>
    <property type="project" value="GO_Central"/>
</dbReference>
<dbReference type="GO" id="GO:0045211">
    <property type="term" value="C:postsynaptic membrane"/>
    <property type="evidence" value="ECO:0000318"/>
    <property type="project" value="GO_Central"/>
</dbReference>
<dbReference type="GO" id="GO:0098793">
    <property type="term" value="C:presynapse"/>
    <property type="evidence" value="ECO:0000314"/>
    <property type="project" value="SynGO"/>
</dbReference>
<dbReference type="GO" id="GO:0001726">
    <property type="term" value="C:ruffle"/>
    <property type="evidence" value="ECO:0000250"/>
    <property type="project" value="UniProtKB"/>
</dbReference>
<dbReference type="GO" id="GO:0030427">
    <property type="term" value="C:site of polarized growth"/>
    <property type="evidence" value="ECO:0000318"/>
    <property type="project" value="GO_Central"/>
</dbReference>
<dbReference type="GO" id="GO:0003779">
    <property type="term" value="F:actin binding"/>
    <property type="evidence" value="ECO:0000250"/>
    <property type="project" value="UniProtKB"/>
</dbReference>
<dbReference type="GO" id="GO:0051015">
    <property type="term" value="F:actin filament binding"/>
    <property type="evidence" value="ECO:0000250"/>
    <property type="project" value="UniProtKB"/>
</dbReference>
<dbReference type="GO" id="GO:0019904">
    <property type="term" value="F:protein domain specific binding"/>
    <property type="evidence" value="ECO:0000266"/>
    <property type="project" value="RGD"/>
</dbReference>
<dbReference type="GO" id="GO:0098973">
    <property type="term" value="F:structural constituent of postsynaptic actin cytoskeleton"/>
    <property type="evidence" value="ECO:0000314"/>
    <property type="project" value="SynGO"/>
</dbReference>
<dbReference type="GO" id="GO:0002250">
    <property type="term" value="P:adaptive immune response"/>
    <property type="evidence" value="ECO:0007669"/>
    <property type="project" value="UniProtKB-KW"/>
</dbReference>
<dbReference type="GO" id="GO:0006897">
    <property type="term" value="P:endocytosis"/>
    <property type="evidence" value="ECO:0007669"/>
    <property type="project" value="UniProtKB-KW"/>
</dbReference>
<dbReference type="GO" id="GO:0048812">
    <property type="term" value="P:neuron projection morphogenesis"/>
    <property type="evidence" value="ECO:0000250"/>
    <property type="project" value="UniProtKB"/>
</dbReference>
<dbReference type="GO" id="GO:0071800">
    <property type="term" value="P:podosome assembly"/>
    <property type="evidence" value="ECO:0000250"/>
    <property type="project" value="UniProtKB"/>
</dbReference>
<dbReference type="GO" id="GO:0045773">
    <property type="term" value="P:positive regulation of axon extension"/>
    <property type="evidence" value="ECO:0000318"/>
    <property type="project" value="GO_Central"/>
</dbReference>
<dbReference type="GO" id="GO:0061003">
    <property type="term" value="P:positive regulation of dendritic spine morphogenesis"/>
    <property type="evidence" value="ECO:0000318"/>
    <property type="project" value="GO_Central"/>
</dbReference>
<dbReference type="GO" id="GO:0098974">
    <property type="term" value="P:postsynaptic actin cytoskeleton organization"/>
    <property type="evidence" value="ECO:0000314"/>
    <property type="project" value="SynGO"/>
</dbReference>
<dbReference type="GO" id="GO:0016601">
    <property type="term" value="P:Rac protein signal transduction"/>
    <property type="evidence" value="ECO:0000250"/>
    <property type="project" value="UniProtKB"/>
</dbReference>
<dbReference type="GO" id="GO:0030833">
    <property type="term" value="P:regulation of actin filament polymerization"/>
    <property type="evidence" value="ECO:0000318"/>
    <property type="project" value="GO_Central"/>
</dbReference>
<dbReference type="GO" id="GO:0007416">
    <property type="term" value="P:synapse assembly"/>
    <property type="evidence" value="ECO:0000250"/>
    <property type="project" value="UniProtKB"/>
</dbReference>
<dbReference type="CDD" id="cd11281">
    <property type="entry name" value="ADF_drebrin_like"/>
    <property type="match status" value="1"/>
</dbReference>
<dbReference type="CDD" id="cd11960">
    <property type="entry name" value="SH3_Abp1_eu"/>
    <property type="match status" value="1"/>
</dbReference>
<dbReference type="FunFam" id="3.40.20.10:FF:000011">
    <property type="entry name" value="Drebrin-like protein B"/>
    <property type="match status" value="1"/>
</dbReference>
<dbReference type="FunFam" id="2.30.30.40:FF:000046">
    <property type="entry name" value="Drebrin-like protein isoform B"/>
    <property type="match status" value="1"/>
</dbReference>
<dbReference type="Gene3D" id="3.40.20.10">
    <property type="entry name" value="Severin"/>
    <property type="match status" value="1"/>
</dbReference>
<dbReference type="Gene3D" id="2.30.30.40">
    <property type="entry name" value="SH3 Domains"/>
    <property type="match status" value="1"/>
</dbReference>
<dbReference type="InterPro" id="IPR002108">
    <property type="entry name" value="ADF-H"/>
</dbReference>
<dbReference type="InterPro" id="IPR029006">
    <property type="entry name" value="ADF-H/Gelsolin-like_dom_sf"/>
</dbReference>
<dbReference type="InterPro" id="IPR035717">
    <property type="entry name" value="Drebrin-like_SH3"/>
</dbReference>
<dbReference type="InterPro" id="IPR036028">
    <property type="entry name" value="SH3-like_dom_sf"/>
</dbReference>
<dbReference type="InterPro" id="IPR001452">
    <property type="entry name" value="SH3_domain"/>
</dbReference>
<dbReference type="PANTHER" id="PTHR10829">
    <property type="entry name" value="CORTACTIN AND DREBRIN"/>
    <property type="match status" value="1"/>
</dbReference>
<dbReference type="PANTHER" id="PTHR10829:SF12">
    <property type="entry name" value="DREBRIN-LIKE PROTEIN"/>
    <property type="match status" value="1"/>
</dbReference>
<dbReference type="Pfam" id="PF00241">
    <property type="entry name" value="Cofilin_ADF"/>
    <property type="match status" value="1"/>
</dbReference>
<dbReference type="Pfam" id="PF14604">
    <property type="entry name" value="SH3_9"/>
    <property type="match status" value="1"/>
</dbReference>
<dbReference type="SMART" id="SM00102">
    <property type="entry name" value="ADF"/>
    <property type="match status" value="1"/>
</dbReference>
<dbReference type="SMART" id="SM00326">
    <property type="entry name" value="SH3"/>
    <property type="match status" value="1"/>
</dbReference>
<dbReference type="SUPFAM" id="SSF55753">
    <property type="entry name" value="Actin depolymerizing proteins"/>
    <property type="match status" value="1"/>
</dbReference>
<dbReference type="SUPFAM" id="SSF50044">
    <property type="entry name" value="SH3-domain"/>
    <property type="match status" value="1"/>
</dbReference>
<dbReference type="PROSITE" id="PS51263">
    <property type="entry name" value="ADF_H"/>
    <property type="match status" value="1"/>
</dbReference>
<dbReference type="PROSITE" id="PS50002">
    <property type="entry name" value="SH3"/>
    <property type="match status" value="1"/>
</dbReference>